<feature type="chain" id="PRO_1000202798" description="Holo-[acyl-carrier-protein] synthase">
    <location>
        <begin position="1"/>
        <end position="126"/>
    </location>
</feature>
<feature type="binding site" evidence="1">
    <location>
        <position position="9"/>
    </location>
    <ligand>
        <name>Mg(2+)</name>
        <dbReference type="ChEBI" id="CHEBI:18420"/>
    </ligand>
</feature>
<feature type="binding site" evidence="1">
    <location>
        <position position="58"/>
    </location>
    <ligand>
        <name>Mg(2+)</name>
        <dbReference type="ChEBI" id="CHEBI:18420"/>
    </ligand>
</feature>
<organism>
    <name type="scientific">Hamiltonella defensa subsp. Acyrthosiphon pisum (strain 5AT)</name>
    <dbReference type="NCBI Taxonomy" id="572265"/>
    <lineage>
        <taxon>Bacteria</taxon>
        <taxon>Pseudomonadati</taxon>
        <taxon>Pseudomonadota</taxon>
        <taxon>Gammaproteobacteria</taxon>
        <taxon>Enterobacterales</taxon>
        <taxon>Enterobacteriaceae</taxon>
        <taxon>aphid secondary symbionts</taxon>
        <taxon>Candidatus Hamiltonella</taxon>
    </lineage>
</organism>
<evidence type="ECO:0000255" key="1">
    <source>
        <dbReference type="HAMAP-Rule" id="MF_00101"/>
    </source>
</evidence>
<gene>
    <name evidence="1" type="primary">acpS</name>
    <name type="ordered locus">HDEF_2292</name>
</gene>
<reference key="1">
    <citation type="journal article" date="2009" name="Proc. Natl. Acad. Sci. U.S.A.">
        <title>Hamiltonella defensa, genome evolution of protective bacterial endosymbiont from pathogenic ancestors.</title>
        <authorList>
            <person name="Degnan P.H."/>
            <person name="Yu Y."/>
            <person name="Sisneros N."/>
            <person name="Wing R.A."/>
            <person name="Moran N.A."/>
        </authorList>
    </citation>
    <scope>NUCLEOTIDE SEQUENCE [LARGE SCALE GENOMIC DNA]</scope>
    <source>
        <strain>5AT</strain>
    </source>
</reference>
<accession>C4K8H4</accession>
<name>ACPS_HAMD5</name>
<keyword id="KW-0963">Cytoplasm</keyword>
<keyword id="KW-0275">Fatty acid biosynthesis</keyword>
<keyword id="KW-0276">Fatty acid metabolism</keyword>
<keyword id="KW-0444">Lipid biosynthesis</keyword>
<keyword id="KW-0443">Lipid metabolism</keyword>
<keyword id="KW-0460">Magnesium</keyword>
<keyword id="KW-0479">Metal-binding</keyword>
<keyword id="KW-0808">Transferase</keyword>
<comment type="function">
    <text evidence="1">Transfers the 4'-phosphopantetheine moiety from coenzyme A to a Ser of acyl-carrier-protein.</text>
</comment>
<comment type="catalytic activity">
    <reaction evidence="1">
        <text>apo-[ACP] + CoA = holo-[ACP] + adenosine 3',5'-bisphosphate + H(+)</text>
        <dbReference type="Rhea" id="RHEA:12068"/>
        <dbReference type="Rhea" id="RHEA-COMP:9685"/>
        <dbReference type="Rhea" id="RHEA-COMP:9690"/>
        <dbReference type="ChEBI" id="CHEBI:15378"/>
        <dbReference type="ChEBI" id="CHEBI:29999"/>
        <dbReference type="ChEBI" id="CHEBI:57287"/>
        <dbReference type="ChEBI" id="CHEBI:58343"/>
        <dbReference type="ChEBI" id="CHEBI:64479"/>
        <dbReference type="EC" id="2.7.8.7"/>
    </reaction>
</comment>
<comment type="cofactor">
    <cofactor evidence="1">
        <name>Mg(2+)</name>
        <dbReference type="ChEBI" id="CHEBI:18420"/>
    </cofactor>
</comment>
<comment type="subcellular location">
    <subcellularLocation>
        <location evidence="1">Cytoplasm</location>
    </subcellularLocation>
</comment>
<comment type="similarity">
    <text evidence="1">Belongs to the P-Pant transferase superfamily. AcpS family.</text>
</comment>
<sequence>MAILGMGTDIVEIARVQAIIARSGDKLAHRILTPLELSEYQQHQQPVRFIAKRFAAKEAAAKALGTGFRNGLELRHFQVIHDELGKPHLLVSDKANEMAVRLSVKSWHLSISDERHYAIALVIVEG</sequence>
<protein>
    <recommendedName>
        <fullName evidence="1">Holo-[acyl-carrier-protein] synthase</fullName>
        <shortName evidence="1">Holo-ACP synthase</shortName>
        <ecNumber evidence="1">2.7.8.7</ecNumber>
    </recommendedName>
    <alternativeName>
        <fullName evidence="1">4'-phosphopantetheinyl transferase AcpS</fullName>
    </alternativeName>
</protein>
<dbReference type="EC" id="2.7.8.7" evidence="1"/>
<dbReference type="EMBL" id="CP001277">
    <property type="protein sequence ID" value="ACQ68830.1"/>
    <property type="molecule type" value="Genomic_DNA"/>
</dbReference>
<dbReference type="RefSeq" id="WP_015874550.1">
    <property type="nucleotide sequence ID" value="NC_012751.1"/>
</dbReference>
<dbReference type="SMR" id="C4K8H4"/>
<dbReference type="STRING" id="572265.HDEF_2292"/>
<dbReference type="GeneID" id="66261787"/>
<dbReference type="KEGG" id="hde:HDEF_2292"/>
<dbReference type="eggNOG" id="COG0736">
    <property type="taxonomic scope" value="Bacteria"/>
</dbReference>
<dbReference type="HOGENOM" id="CLU_089696_3_1_6"/>
<dbReference type="Proteomes" id="UP000002334">
    <property type="component" value="Chromosome"/>
</dbReference>
<dbReference type="GO" id="GO:0005737">
    <property type="term" value="C:cytoplasm"/>
    <property type="evidence" value="ECO:0007669"/>
    <property type="project" value="UniProtKB-SubCell"/>
</dbReference>
<dbReference type="GO" id="GO:0008897">
    <property type="term" value="F:holo-[acyl-carrier-protein] synthase activity"/>
    <property type="evidence" value="ECO:0007669"/>
    <property type="project" value="UniProtKB-UniRule"/>
</dbReference>
<dbReference type="GO" id="GO:0000287">
    <property type="term" value="F:magnesium ion binding"/>
    <property type="evidence" value="ECO:0007669"/>
    <property type="project" value="UniProtKB-UniRule"/>
</dbReference>
<dbReference type="GO" id="GO:0006633">
    <property type="term" value="P:fatty acid biosynthetic process"/>
    <property type="evidence" value="ECO:0007669"/>
    <property type="project" value="UniProtKB-UniRule"/>
</dbReference>
<dbReference type="FunFam" id="3.90.470.20:FF:000001">
    <property type="entry name" value="Holo-[acyl-carrier-protein] synthase"/>
    <property type="match status" value="1"/>
</dbReference>
<dbReference type="Gene3D" id="3.90.470.20">
    <property type="entry name" value="4'-phosphopantetheinyl transferase domain"/>
    <property type="match status" value="1"/>
</dbReference>
<dbReference type="HAMAP" id="MF_00101">
    <property type="entry name" value="AcpS"/>
    <property type="match status" value="1"/>
</dbReference>
<dbReference type="InterPro" id="IPR008278">
    <property type="entry name" value="4-PPantetheinyl_Trfase_dom"/>
</dbReference>
<dbReference type="InterPro" id="IPR037143">
    <property type="entry name" value="4-PPantetheinyl_Trfase_dom_sf"/>
</dbReference>
<dbReference type="InterPro" id="IPR002582">
    <property type="entry name" value="ACPS"/>
</dbReference>
<dbReference type="InterPro" id="IPR004568">
    <property type="entry name" value="Ppantetheine-prot_Trfase_dom"/>
</dbReference>
<dbReference type="NCBIfam" id="TIGR00516">
    <property type="entry name" value="acpS"/>
    <property type="match status" value="1"/>
</dbReference>
<dbReference type="NCBIfam" id="TIGR00556">
    <property type="entry name" value="pantethn_trn"/>
    <property type="match status" value="1"/>
</dbReference>
<dbReference type="Pfam" id="PF01648">
    <property type="entry name" value="ACPS"/>
    <property type="match status" value="1"/>
</dbReference>
<dbReference type="SUPFAM" id="SSF56214">
    <property type="entry name" value="4'-phosphopantetheinyl transferase"/>
    <property type="match status" value="1"/>
</dbReference>
<proteinExistence type="inferred from homology"/>